<protein>
    <recommendedName>
        <fullName evidence="1">Ribosome-recycling factor</fullName>
        <shortName evidence="1">RRF</shortName>
    </recommendedName>
    <alternativeName>
        <fullName evidence="1">Ribosome-releasing factor</fullName>
    </alternativeName>
</protein>
<accession>A7H147</accession>
<evidence type="ECO:0000255" key="1">
    <source>
        <dbReference type="HAMAP-Rule" id="MF_00040"/>
    </source>
</evidence>
<evidence type="ECO:0000256" key="2">
    <source>
        <dbReference type="SAM" id="MobiDB-lite"/>
    </source>
</evidence>
<proteinExistence type="inferred from homology"/>
<sequence>MLNDVYAAQKDGCEKAIASLKRDFTTLRTGKVNISILDHVMIDYYGSMTPLNQVATVLASDASTISITPWEKSMIKTISGAIQAANIGVNPNSDGECVKLFFPPMTIEQRQENAKHAKAMGEKAKVSVRNVRKDANDEVKKLEKDKAITEDESKKGQDEVQKITDGYVAKIDALVKEKEAELLKV</sequence>
<dbReference type="EMBL" id="CP000767">
    <property type="protein sequence ID" value="EAU00862.1"/>
    <property type="molecule type" value="Genomic_DNA"/>
</dbReference>
<dbReference type="RefSeq" id="WP_011992875.1">
    <property type="nucleotide sequence ID" value="NC_009715.2"/>
</dbReference>
<dbReference type="SMR" id="A7H147"/>
<dbReference type="STRING" id="360105.CCV52592_2111"/>
<dbReference type="KEGG" id="ccv:CCV52592_2111"/>
<dbReference type="HOGENOM" id="CLU_073981_2_0_7"/>
<dbReference type="OrthoDB" id="9804006at2"/>
<dbReference type="Proteomes" id="UP000006380">
    <property type="component" value="Chromosome"/>
</dbReference>
<dbReference type="GO" id="GO:0005829">
    <property type="term" value="C:cytosol"/>
    <property type="evidence" value="ECO:0007669"/>
    <property type="project" value="GOC"/>
</dbReference>
<dbReference type="GO" id="GO:0043023">
    <property type="term" value="F:ribosomal large subunit binding"/>
    <property type="evidence" value="ECO:0007669"/>
    <property type="project" value="TreeGrafter"/>
</dbReference>
<dbReference type="GO" id="GO:0002184">
    <property type="term" value="P:cytoplasmic translational termination"/>
    <property type="evidence" value="ECO:0007669"/>
    <property type="project" value="TreeGrafter"/>
</dbReference>
<dbReference type="CDD" id="cd00520">
    <property type="entry name" value="RRF"/>
    <property type="match status" value="1"/>
</dbReference>
<dbReference type="FunFam" id="1.10.132.20:FF:000001">
    <property type="entry name" value="Ribosome-recycling factor"/>
    <property type="match status" value="1"/>
</dbReference>
<dbReference type="FunFam" id="3.30.1360.40:FF:000001">
    <property type="entry name" value="Ribosome-recycling factor"/>
    <property type="match status" value="1"/>
</dbReference>
<dbReference type="Gene3D" id="3.30.1360.40">
    <property type="match status" value="1"/>
</dbReference>
<dbReference type="Gene3D" id="1.10.132.20">
    <property type="entry name" value="Ribosome-recycling factor"/>
    <property type="match status" value="1"/>
</dbReference>
<dbReference type="HAMAP" id="MF_00040">
    <property type="entry name" value="RRF"/>
    <property type="match status" value="1"/>
</dbReference>
<dbReference type="InterPro" id="IPR002661">
    <property type="entry name" value="Ribosome_recyc_fac"/>
</dbReference>
<dbReference type="InterPro" id="IPR023584">
    <property type="entry name" value="Ribosome_recyc_fac_dom"/>
</dbReference>
<dbReference type="InterPro" id="IPR036191">
    <property type="entry name" value="RRF_sf"/>
</dbReference>
<dbReference type="NCBIfam" id="TIGR00496">
    <property type="entry name" value="frr"/>
    <property type="match status" value="1"/>
</dbReference>
<dbReference type="PANTHER" id="PTHR20982:SF3">
    <property type="entry name" value="MITOCHONDRIAL RIBOSOME RECYCLING FACTOR PSEUDO 1"/>
    <property type="match status" value="1"/>
</dbReference>
<dbReference type="PANTHER" id="PTHR20982">
    <property type="entry name" value="RIBOSOME RECYCLING FACTOR"/>
    <property type="match status" value="1"/>
</dbReference>
<dbReference type="Pfam" id="PF01765">
    <property type="entry name" value="RRF"/>
    <property type="match status" value="1"/>
</dbReference>
<dbReference type="SUPFAM" id="SSF55194">
    <property type="entry name" value="Ribosome recycling factor, RRF"/>
    <property type="match status" value="1"/>
</dbReference>
<name>RRF_CAMC5</name>
<comment type="function">
    <text evidence="1">Responsible for the release of ribosomes from messenger RNA at the termination of protein biosynthesis. May increase the efficiency of translation by recycling ribosomes from one round of translation to another.</text>
</comment>
<comment type="subcellular location">
    <subcellularLocation>
        <location evidence="1">Cytoplasm</location>
    </subcellularLocation>
</comment>
<comment type="similarity">
    <text evidence="1">Belongs to the RRF family.</text>
</comment>
<keyword id="KW-0963">Cytoplasm</keyword>
<keyword id="KW-0648">Protein biosynthesis</keyword>
<keyword id="KW-1185">Reference proteome</keyword>
<organism>
    <name type="scientific">Campylobacter curvus (strain 525.92)</name>
    <dbReference type="NCBI Taxonomy" id="360105"/>
    <lineage>
        <taxon>Bacteria</taxon>
        <taxon>Pseudomonadati</taxon>
        <taxon>Campylobacterota</taxon>
        <taxon>Epsilonproteobacteria</taxon>
        <taxon>Campylobacterales</taxon>
        <taxon>Campylobacteraceae</taxon>
        <taxon>Campylobacter</taxon>
    </lineage>
</organism>
<feature type="chain" id="PRO_1000003129" description="Ribosome-recycling factor">
    <location>
        <begin position="1"/>
        <end position="185"/>
    </location>
</feature>
<feature type="region of interest" description="Disordered" evidence="2">
    <location>
        <begin position="135"/>
        <end position="159"/>
    </location>
</feature>
<gene>
    <name evidence="1" type="primary">frr</name>
    <name type="ordered locus">Ccur92_18850</name>
    <name type="ORF">CCV52592_2111</name>
</gene>
<reference key="1">
    <citation type="submission" date="2007-07" db="EMBL/GenBank/DDBJ databases">
        <title>Genome sequence of Campylobacter curvus 525.92 isolated from human feces.</title>
        <authorList>
            <person name="Fouts D.E."/>
            <person name="Mongodin E.F."/>
            <person name="Puiu D."/>
            <person name="Sebastian Y."/>
            <person name="Miller W.G."/>
            <person name="Mandrell R.E."/>
            <person name="Lastovica A.J."/>
            <person name="Nelson K.E."/>
        </authorList>
    </citation>
    <scope>NUCLEOTIDE SEQUENCE [LARGE SCALE GENOMIC DNA]</scope>
    <source>
        <strain>525.92</strain>
    </source>
</reference>